<organism>
    <name type="scientific">Cereibacter sphaeroides (strain ATCC 17029 / ATH 2.4.9)</name>
    <name type="common">Rhodobacter sphaeroides</name>
    <dbReference type="NCBI Taxonomy" id="349101"/>
    <lineage>
        <taxon>Bacteria</taxon>
        <taxon>Pseudomonadati</taxon>
        <taxon>Pseudomonadota</taxon>
        <taxon>Alphaproteobacteria</taxon>
        <taxon>Rhodobacterales</taxon>
        <taxon>Paracoccaceae</taxon>
        <taxon>Cereibacter</taxon>
    </lineage>
</organism>
<evidence type="ECO:0000255" key="1">
    <source>
        <dbReference type="HAMAP-Rule" id="MF_00022"/>
    </source>
</evidence>
<sequence>MPAASDKPVVTRFAPSPTGYLHIGGGRTALFNWLYARGRKGTFLLRIEDTDRERSTPEATDAILRGLTWLGLDWDGEVVSQFARKDRHAEVAREMLARGAAYKCFSTQEEIEAFREAARAEGRSTLFRSPWRDADPTSHPDAPFVIRMKAPRSGETVIEDEVQGTVRFQNETLDDMVVLRSDGTPTYMLAVVVDDHDMGVTHVIRGDDHLNNAARQTMVYEAMGWEVPVWAHIPLIHGPDGKKLSKRHGALGVEEYQAMGYPAAGMRNYLARLGWSHGDDEFFTSEQAMDWFDLGGIGRSPARLDFKKLESVCGQHIAVMEDAELMREIAAYLAAARKPALTDLQAERLEKGLYALKDRAKTFPELLEKARFALESRPIAADDAAAKALDPVSRGILRELTPMLQAASWSKQDLEAILTAFASEKGMGFGKLAAPLRTALAGRTVTPSVYDMMLVIGRDETIARLEDAAAA</sequence>
<keyword id="KW-0030">Aminoacyl-tRNA synthetase</keyword>
<keyword id="KW-0067">ATP-binding</keyword>
<keyword id="KW-0963">Cytoplasm</keyword>
<keyword id="KW-0436">Ligase</keyword>
<keyword id="KW-0547">Nucleotide-binding</keyword>
<keyword id="KW-0648">Protein biosynthesis</keyword>
<comment type="function">
    <text evidence="1">Catalyzes the attachment of glutamate to tRNA(Glu) in a two-step reaction: glutamate is first activated by ATP to form Glu-AMP and then transferred to the acceptor end of tRNA(Glu).</text>
</comment>
<comment type="catalytic activity">
    <reaction evidence="1">
        <text>tRNA(Glu) + L-glutamate + ATP = L-glutamyl-tRNA(Glu) + AMP + diphosphate</text>
        <dbReference type="Rhea" id="RHEA:23540"/>
        <dbReference type="Rhea" id="RHEA-COMP:9663"/>
        <dbReference type="Rhea" id="RHEA-COMP:9680"/>
        <dbReference type="ChEBI" id="CHEBI:29985"/>
        <dbReference type="ChEBI" id="CHEBI:30616"/>
        <dbReference type="ChEBI" id="CHEBI:33019"/>
        <dbReference type="ChEBI" id="CHEBI:78442"/>
        <dbReference type="ChEBI" id="CHEBI:78520"/>
        <dbReference type="ChEBI" id="CHEBI:456215"/>
        <dbReference type="EC" id="6.1.1.17"/>
    </reaction>
</comment>
<comment type="subunit">
    <text evidence="1">Monomer.</text>
</comment>
<comment type="subcellular location">
    <subcellularLocation>
        <location evidence="1">Cytoplasm</location>
    </subcellularLocation>
</comment>
<comment type="similarity">
    <text evidence="1">Belongs to the class-I aminoacyl-tRNA synthetase family. Glutamate--tRNA ligase type 1 subfamily.</text>
</comment>
<accession>A3PHK2</accession>
<feature type="chain" id="PRO_0000367747" description="Glutamate--tRNA ligase 1">
    <location>
        <begin position="1"/>
        <end position="471"/>
    </location>
</feature>
<feature type="short sequence motif" description="'HIGH' region" evidence="1">
    <location>
        <begin position="15"/>
        <end position="25"/>
    </location>
</feature>
<feature type="short sequence motif" description="'KMSKS' region" evidence="1">
    <location>
        <begin position="243"/>
        <end position="247"/>
    </location>
</feature>
<feature type="binding site" evidence="1">
    <location>
        <position position="246"/>
    </location>
    <ligand>
        <name>ATP</name>
        <dbReference type="ChEBI" id="CHEBI:30616"/>
    </ligand>
</feature>
<gene>
    <name evidence="1" type="primary">gltX1</name>
    <name type="ordered locus">Rsph17029_0705</name>
</gene>
<name>SYE1_CERS1</name>
<proteinExistence type="inferred from homology"/>
<dbReference type="EC" id="6.1.1.17" evidence="1"/>
<dbReference type="EMBL" id="CP000577">
    <property type="protein sequence ID" value="ABN75818.1"/>
    <property type="molecule type" value="Genomic_DNA"/>
</dbReference>
<dbReference type="RefSeq" id="WP_011840551.1">
    <property type="nucleotide sequence ID" value="NC_009049.1"/>
</dbReference>
<dbReference type="SMR" id="A3PHK2"/>
<dbReference type="KEGG" id="rsh:Rsph17029_0705"/>
<dbReference type="HOGENOM" id="CLU_015768_6_3_5"/>
<dbReference type="GO" id="GO:0005829">
    <property type="term" value="C:cytosol"/>
    <property type="evidence" value="ECO:0007669"/>
    <property type="project" value="TreeGrafter"/>
</dbReference>
<dbReference type="GO" id="GO:0005524">
    <property type="term" value="F:ATP binding"/>
    <property type="evidence" value="ECO:0007669"/>
    <property type="project" value="UniProtKB-UniRule"/>
</dbReference>
<dbReference type="GO" id="GO:0004818">
    <property type="term" value="F:glutamate-tRNA ligase activity"/>
    <property type="evidence" value="ECO:0007669"/>
    <property type="project" value="UniProtKB-UniRule"/>
</dbReference>
<dbReference type="GO" id="GO:0000049">
    <property type="term" value="F:tRNA binding"/>
    <property type="evidence" value="ECO:0007669"/>
    <property type="project" value="InterPro"/>
</dbReference>
<dbReference type="GO" id="GO:0008270">
    <property type="term" value="F:zinc ion binding"/>
    <property type="evidence" value="ECO:0007669"/>
    <property type="project" value="InterPro"/>
</dbReference>
<dbReference type="GO" id="GO:0006424">
    <property type="term" value="P:glutamyl-tRNA aminoacylation"/>
    <property type="evidence" value="ECO:0007669"/>
    <property type="project" value="UniProtKB-UniRule"/>
</dbReference>
<dbReference type="CDD" id="cd00808">
    <property type="entry name" value="GluRS_core"/>
    <property type="match status" value="1"/>
</dbReference>
<dbReference type="FunFam" id="3.40.50.620:FF:000007">
    <property type="entry name" value="Glutamate--tRNA ligase"/>
    <property type="match status" value="1"/>
</dbReference>
<dbReference type="Gene3D" id="1.10.10.350">
    <property type="match status" value="1"/>
</dbReference>
<dbReference type="Gene3D" id="3.40.50.620">
    <property type="entry name" value="HUPs"/>
    <property type="match status" value="1"/>
</dbReference>
<dbReference type="HAMAP" id="MF_00022">
    <property type="entry name" value="Glu_tRNA_synth_type1"/>
    <property type="match status" value="1"/>
</dbReference>
<dbReference type="InterPro" id="IPR045462">
    <property type="entry name" value="aa-tRNA-synth_I_cd-bd"/>
</dbReference>
<dbReference type="InterPro" id="IPR020751">
    <property type="entry name" value="aa-tRNA-synth_I_codon-bd_sub2"/>
</dbReference>
<dbReference type="InterPro" id="IPR001412">
    <property type="entry name" value="aa-tRNA-synth_I_CS"/>
</dbReference>
<dbReference type="InterPro" id="IPR008925">
    <property type="entry name" value="aa_tRNA-synth_I_cd-bd_sf"/>
</dbReference>
<dbReference type="InterPro" id="IPR004527">
    <property type="entry name" value="Glu-tRNA-ligase_bac/mito"/>
</dbReference>
<dbReference type="InterPro" id="IPR000924">
    <property type="entry name" value="Glu/Gln-tRNA-synth"/>
</dbReference>
<dbReference type="InterPro" id="IPR020058">
    <property type="entry name" value="Glu/Gln-tRNA-synth_Ib_cat-dom"/>
</dbReference>
<dbReference type="InterPro" id="IPR049940">
    <property type="entry name" value="GluQ/Sye"/>
</dbReference>
<dbReference type="InterPro" id="IPR033910">
    <property type="entry name" value="GluRS_core"/>
</dbReference>
<dbReference type="InterPro" id="IPR014729">
    <property type="entry name" value="Rossmann-like_a/b/a_fold"/>
</dbReference>
<dbReference type="NCBIfam" id="TIGR00464">
    <property type="entry name" value="gltX_bact"/>
    <property type="match status" value="1"/>
</dbReference>
<dbReference type="PANTHER" id="PTHR43311">
    <property type="entry name" value="GLUTAMATE--TRNA LIGASE"/>
    <property type="match status" value="1"/>
</dbReference>
<dbReference type="PANTHER" id="PTHR43311:SF2">
    <property type="entry name" value="GLUTAMATE--TRNA LIGASE, MITOCHONDRIAL-RELATED"/>
    <property type="match status" value="1"/>
</dbReference>
<dbReference type="Pfam" id="PF19269">
    <property type="entry name" value="Anticodon_2"/>
    <property type="match status" value="1"/>
</dbReference>
<dbReference type="Pfam" id="PF00749">
    <property type="entry name" value="tRNA-synt_1c"/>
    <property type="match status" value="1"/>
</dbReference>
<dbReference type="PRINTS" id="PR00987">
    <property type="entry name" value="TRNASYNTHGLU"/>
</dbReference>
<dbReference type="SUPFAM" id="SSF48163">
    <property type="entry name" value="An anticodon-binding domain of class I aminoacyl-tRNA synthetases"/>
    <property type="match status" value="1"/>
</dbReference>
<dbReference type="SUPFAM" id="SSF52374">
    <property type="entry name" value="Nucleotidylyl transferase"/>
    <property type="match status" value="1"/>
</dbReference>
<dbReference type="PROSITE" id="PS00178">
    <property type="entry name" value="AA_TRNA_LIGASE_I"/>
    <property type="match status" value="1"/>
</dbReference>
<reference key="1">
    <citation type="submission" date="2007-02" db="EMBL/GenBank/DDBJ databases">
        <title>Complete sequence of chromosome 1 of Rhodobacter sphaeroides ATCC 17029.</title>
        <authorList>
            <person name="Copeland A."/>
            <person name="Lucas S."/>
            <person name="Lapidus A."/>
            <person name="Barry K."/>
            <person name="Detter J.C."/>
            <person name="Glavina del Rio T."/>
            <person name="Hammon N."/>
            <person name="Israni S."/>
            <person name="Dalin E."/>
            <person name="Tice H."/>
            <person name="Pitluck S."/>
            <person name="Kiss H."/>
            <person name="Brettin T."/>
            <person name="Bruce D."/>
            <person name="Han C."/>
            <person name="Tapia R."/>
            <person name="Gilna P."/>
            <person name="Schmutz J."/>
            <person name="Larimer F."/>
            <person name="Land M."/>
            <person name="Hauser L."/>
            <person name="Kyrpides N."/>
            <person name="Mikhailova N."/>
            <person name="Richardson P."/>
            <person name="Mackenzie C."/>
            <person name="Choudhary M."/>
            <person name="Donohue T.J."/>
            <person name="Kaplan S."/>
        </authorList>
    </citation>
    <scope>NUCLEOTIDE SEQUENCE [LARGE SCALE GENOMIC DNA]</scope>
    <source>
        <strain>ATCC 17029 / ATH 2.4.9</strain>
    </source>
</reference>
<protein>
    <recommendedName>
        <fullName evidence="1">Glutamate--tRNA ligase 1</fullName>
        <ecNumber evidence="1">6.1.1.17</ecNumber>
    </recommendedName>
    <alternativeName>
        <fullName evidence="1">Glutamyl-tRNA synthetase 1</fullName>
        <shortName evidence="1">GluRS 1</shortName>
    </alternativeName>
</protein>